<feature type="chain" id="PRO_0000179984" description="D-nopaline dehydrogenase">
    <location>
        <begin position="1"/>
        <end position="412"/>
    </location>
</feature>
<reference key="1">
    <citation type="journal article" date="1994" name="Mol. Gen. Genet.">
        <title>Agrobacterium vitis nopaline Ti plasmid pTiAB4: relationship to other Ti plasmids and T-DNA structure.</title>
        <authorList>
            <person name="Otten L."/>
            <person name="de Ruffray P."/>
        </authorList>
    </citation>
    <scope>NUCLEOTIDE SEQUENCE [GENOMIC DNA]</scope>
    <source>
        <strain>AB4</strain>
    </source>
</reference>
<protein>
    <recommendedName>
        <fullName>D-nopaline dehydrogenase</fullName>
        <ecNumber>1.5.1.19</ecNumber>
    </recommendedName>
    <alternativeName>
        <fullName>Nopaline synthase</fullName>
    </alternativeName>
</protein>
<geneLocation type="plasmid">
    <name>pTiAB4</name>
</geneLocation>
<proteinExistence type="inferred from homology"/>
<organism>
    <name type="scientific">Agrobacterium vitis</name>
    <name type="common">Rhizobium vitis</name>
    <dbReference type="NCBI Taxonomy" id="373"/>
    <lineage>
        <taxon>Bacteria</taxon>
        <taxon>Pseudomonadati</taxon>
        <taxon>Pseudomonadota</taxon>
        <taxon>Alphaproteobacteria</taxon>
        <taxon>Hyphomicrobiales</taxon>
        <taxon>Rhizobiaceae</taxon>
        <taxon>Rhizobium/Agrobacterium group</taxon>
        <taxon>Agrobacterium</taxon>
    </lineage>
</organism>
<evidence type="ECO:0000250" key="1"/>
<evidence type="ECO:0000305" key="2"/>
<sequence length="412" mass="45279">MRLASSSTSLPVPAAGHHPLPLTVGVLGSGHAGTALAAWFASRHVSTALWAPADHPGSISAIKANEGVVTTEGVINGSFTVSASDDLLAVIRSSHLLIIVTRADVHDSFVSELANFNGELAEKDILVVCGHGFSMKYERQLQCKRILETDNSPTTSKLSDKKKCKVNIKEMKASFGLSCFPIHRNDVGVIDLPEDIKIIFAQLFTARIIPIPPLQVLFFSNYITHAVAAVMNIGSVRDPVNSLTKRAEQWLLELDERTPRAETGFFFYGEGSNTYVCKVQEQIDQERRKVAKACGLHLNSLLQECNDEYGTDYATLREYCLAPSPHNVHYACPDNMEHRYFSEELCSLEDIAAIATITKIEMPLTRAFINIIHAGKGNFPPTDKTSSVIGNFRSGDLIRFGATIFVKDEKMK</sequence>
<dbReference type="EC" id="1.5.1.19"/>
<dbReference type="EMBL" id="X77327">
    <property type="protein sequence ID" value="CAA54543.1"/>
    <property type="molecule type" value="Genomic_DNA"/>
</dbReference>
<dbReference type="PIR" id="S41895">
    <property type="entry name" value="S41895"/>
</dbReference>
<dbReference type="SMR" id="Q44524"/>
<dbReference type="GO" id="GO:0047829">
    <property type="term" value="F:D-nopaline dehydrogenase activity"/>
    <property type="evidence" value="ECO:0007669"/>
    <property type="project" value="UniProtKB-EC"/>
</dbReference>
<dbReference type="GO" id="GO:0051287">
    <property type="term" value="F:NAD binding"/>
    <property type="evidence" value="ECO:0007669"/>
    <property type="project" value="InterPro"/>
</dbReference>
<dbReference type="GO" id="GO:0016616">
    <property type="term" value="F:oxidoreductase activity, acting on the CH-OH group of donors, NAD or NADP as acceptor"/>
    <property type="evidence" value="ECO:0007669"/>
    <property type="project" value="InterPro"/>
</dbReference>
<dbReference type="GO" id="GO:0046168">
    <property type="term" value="P:glycerol-3-phosphate catabolic process"/>
    <property type="evidence" value="ECO:0007669"/>
    <property type="project" value="InterPro"/>
</dbReference>
<dbReference type="Gene3D" id="1.10.1040.10">
    <property type="entry name" value="N-(1-d-carboxylethyl)-l-norvaline Dehydrogenase, domain 2"/>
    <property type="match status" value="1"/>
</dbReference>
<dbReference type="Gene3D" id="3.40.50.720">
    <property type="entry name" value="NAD(P)-binding Rossmann-like Domain"/>
    <property type="match status" value="1"/>
</dbReference>
<dbReference type="InterPro" id="IPR008927">
    <property type="entry name" value="6-PGluconate_DH-like_C_sf"/>
</dbReference>
<dbReference type="InterPro" id="IPR013328">
    <property type="entry name" value="6PGD_dom2"/>
</dbReference>
<dbReference type="InterPro" id="IPR011128">
    <property type="entry name" value="G3P_DH_NAD-dep_N"/>
</dbReference>
<dbReference type="InterPro" id="IPR036291">
    <property type="entry name" value="NAD(P)-bd_dom_sf"/>
</dbReference>
<dbReference type="InterPro" id="IPR003421">
    <property type="entry name" value="Opine_DH"/>
</dbReference>
<dbReference type="Pfam" id="PF01210">
    <property type="entry name" value="NAD_Gly3P_dh_N"/>
    <property type="match status" value="1"/>
</dbReference>
<dbReference type="Pfam" id="PF02317">
    <property type="entry name" value="Octopine_DH"/>
    <property type="match status" value="1"/>
</dbReference>
<dbReference type="SUPFAM" id="SSF48179">
    <property type="entry name" value="6-phosphogluconate dehydrogenase C-terminal domain-like"/>
    <property type="match status" value="1"/>
</dbReference>
<dbReference type="SUPFAM" id="SSF51735">
    <property type="entry name" value="NAD(P)-binding Rossmann-fold domains"/>
    <property type="match status" value="1"/>
</dbReference>
<keyword id="KW-0192">Crown gall tumor</keyword>
<keyword id="KW-0521">NADP</keyword>
<keyword id="KW-0560">Oxidoreductase</keyword>
<keyword id="KW-0614">Plasmid</keyword>
<comment type="catalytic activity">
    <reaction>
        <text>D-nopaline + NADP(+) + H2O = L-arginine + 2-oxoglutarate + NADPH + H(+)</text>
        <dbReference type="Rhea" id="RHEA:19637"/>
        <dbReference type="ChEBI" id="CHEBI:15377"/>
        <dbReference type="ChEBI" id="CHEBI:15378"/>
        <dbReference type="ChEBI" id="CHEBI:16810"/>
        <dbReference type="ChEBI" id="CHEBI:32682"/>
        <dbReference type="ChEBI" id="CHEBI:57783"/>
        <dbReference type="ChEBI" id="CHEBI:58074"/>
        <dbReference type="ChEBI" id="CHEBI:58349"/>
        <dbReference type="EC" id="1.5.1.19"/>
    </reaction>
</comment>
<comment type="subunit">
    <text evidence="1">Homotetramer.</text>
</comment>
<comment type="similarity">
    <text evidence="2">Belongs to the lysopine/nopaline/octopine/opine/vitopine dehydrogenases family.</text>
</comment>
<name>DHNO_AGRVI</name>
<gene>
    <name type="primary">nos</name>
</gene>
<accession>Q44524</accession>